<keyword id="KW-1185">Reference proteome</keyword>
<keyword id="KW-0687">Ribonucleoprotein</keyword>
<keyword id="KW-0689">Ribosomal protein</keyword>
<keyword id="KW-0694">RNA-binding</keyword>
<keyword id="KW-0699">rRNA-binding</keyword>
<comment type="function">
    <text evidence="1">Binds to the 23S rRNA.</text>
</comment>
<comment type="subunit">
    <text evidence="1">Part of the 50S ribosomal subunit.</text>
</comment>
<comment type="similarity">
    <text evidence="1">Belongs to the universal ribosomal protein uL15 family.</text>
</comment>
<gene>
    <name evidence="1" type="primary">rplO</name>
    <name type="ordered locus">Bd2956</name>
</gene>
<feature type="chain" id="PRO_0000104681" description="Large ribosomal subunit protein uL15">
    <location>
        <begin position="1"/>
        <end position="145"/>
    </location>
</feature>
<feature type="region of interest" description="Disordered" evidence="2">
    <location>
        <begin position="1"/>
        <end position="55"/>
    </location>
</feature>
<feature type="compositionally biased region" description="Basic residues" evidence="2">
    <location>
        <begin position="12"/>
        <end position="21"/>
    </location>
</feature>
<feature type="compositionally biased region" description="Gly residues" evidence="2">
    <location>
        <begin position="22"/>
        <end position="32"/>
    </location>
</feature>
<dbReference type="EMBL" id="BX842654">
    <property type="protein sequence ID" value="CAE80731.1"/>
    <property type="molecule type" value="Genomic_DNA"/>
</dbReference>
<dbReference type="RefSeq" id="WP_011165335.1">
    <property type="nucleotide sequence ID" value="NC_005363.1"/>
</dbReference>
<dbReference type="SMR" id="Q6MJ31"/>
<dbReference type="STRING" id="264462.Bd2956"/>
<dbReference type="GeneID" id="93013821"/>
<dbReference type="KEGG" id="bba:Bd2956"/>
<dbReference type="eggNOG" id="COG0200">
    <property type="taxonomic scope" value="Bacteria"/>
</dbReference>
<dbReference type="HOGENOM" id="CLU_055188_4_2_7"/>
<dbReference type="Proteomes" id="UP000008080">
    <property type="component" value="Chromosome"/>
</dbReference>
<dbReference type="GO" id="GO:0022625">
    <property type="term" value="C:cytosolic large ribosomal subunit"/>
    <property type="evidence" value="ECO:0007669"/>
    <property type="project" value="TreeGrafter"/>
</dbReference>
<dbReference type="GO" id="GO:0019843">
    <property type="term" value="F:rRNA binding"/>
    <property type="evidence" value="ECO:0007669"/>
    <property type="project" value="UniProtKB-UniRule"/>
</dbReference>
<dbReference type="GO" id="GO:0003735">
    <property type="term" value="F:structural constituent of ribosome"/>
    <property type="evidence" value="ECO:0007669"/>
    <property type="project" value="InterPro"/>
</dbReference>
<dbReference type="GO" id="GO:0006412">
    <property type="term" value="P:translation"/>
    <property type="evidence" value="ECO:0007669"/>
    <property type="project" value="UniProtKB-UniRule"/>
</dbReference>
<dbReference type="Gene3D" id="3.100.10.10">
    <property type="match status" value="1"/>
</dbReference>
<dbReference type="HAMAP" id="MF_01341">
    <property type="entry name" value="Ribosomal_uL15"/>
    <property type="match status" value="1"/>
</dbReference>
<dbReference type="InterPro" id="IPR030878">
    <property type="entry name" value="Ribosomal_uL15"/>
</dbReference>
<dbReference type="InterPro" id="IPR021131">
    <property type="entry name" value="Ribosomal_uL15/eL18"/>
</dbReference>
<dbReference type="InterPro" id="IPR036227">
    <property type="entry name" value="Ribosomal_uL15/eL18_sf"/>
</dbReference>
<dbReference type="InterPro" id="IPR005749">
    <property type="entry name" value="Ribosomal_uL15_bac-type"/>
</dbReference>
<dbReference type="InterPro" id="IPR001196">
    <property type="entry name" value="Ribosomal_uL15_CS"/>
</dbReference>
<dbReference type="NCBIfam" id="TIGR01071">
    <property type="entry name" value="rplO_bact"/>
    <property type="match status" value="1"/>
</dbReference>
<dbReference type="PANTHER" id="PTHR12934">
    <property type="entry name" value="50S RIBOSOMAL PROTEIN L15"/>
    <property type="match status" value="1"/>
</dbReference>
<dbReference type="PANTHER" id="PTHR12934:SF11">
    <property type="entry name" value="LARGE RIBOSOMAL SUBUNIT PROTEIN UL15M"/>
    <property type="match status" value="1"/>
</dbReference>
<dbReference type="Pfam" id="PF00828">
    <property type="entry name" value="Ribosomal_L27A"/>
    <property type="match status" value="1"/>
</dbReference>
<dbReference type="SUPFAM" id="SSF52080">
    <property type="entry name" value="Ribosomal proteins L15p and L18e"/>
    <property type="match status" value="1"/>
</dbReference>
<dbReference type="PROSITE" id="PS00475">
    <property type="entry name" value="RIBOSOMAL_L15"/>
    <property type="match status" value="1"/>
</dbReference>
<proteinExistence type="inferred from homology"/>
<protein>
    <recommendedName>
        <fullName evidence="1">Large ribosomal subunit protein uL15</fullName>
    </recommendedName>
    <alternativeName>
        <fullName evidence="3">50S ribosomal protein L15</fullName>
    </alternativeName>
</protein>
<sequence length="145" mass="14998">MSLLKTLAPKAGSKHAPKRIGRGIGSGMGGTATKGHKGQLARTGGTVRRGFEGGQTPLHRRLPKFGFSNVAFANNFEIVNVGQLAKFSGEVTPESLHAAGLISKGAVKILGNGELKTALTVKAHKFSESAKKAIEAAGGKVEVIK</sequence>
<name>RL15_BDEBA</name>
<reference key="1">
    <citation type="journal article" date="2004" name="Science">
        <title>A predator unmasked: life cycle of Bdellovibrio bacteriovorus from a genomic perspective.</title>
        <authorList>
            <person name="Rendulic S."/>
            <person name="Jagtap P."/>
            <person name="Rosinus A."/>
            <person name="Eppinger M."/>
            <person name="Baar C."/>
            <person name="Lanz C."/>
            <person name="Keller H."/>
            <person name="Lambert C."/>
            <person name="Evans K.J."/>
            <person name="Goesmann A."/>
            <person name="Meyer F."/>
            <person name="Sockett R.E."/>
            <person name="Schuster S.C."/>
        </authorList>
    </citation>
    <scope>NUCLEOTIDE SEQUENCE [LARGE SCALE GENOMIC DNA]</scope>
    <source>
        <strain>ATCC 15356 / DSM 50701 / NCIMB 9529 / HD100</strain>
    </source>
</reference>
<accession>Q6MJ31</accession>
<evidence type="ECO:0000255" key="1">
    <source>
        <dbReference type="HAMAP-Rule" id="MF_01341"/>
    </source>
</evidence>
<evidence type="ECO:0000256" key="2">
    <source>
        <dbReference type="SAM" id="MobiDB-lite"/>
    </source>
</evidence>
<evidence type="ECO:0000305" key="3"/>
<organism>
    <name type="scientific">Bdellovibrio bacteriovorus (strain ATCC 15356 / DSM 50701 / NCIMB 9529 / HD100)</name>
    <dbReference type="NCBI Taxonomy" id="264462"/>
    <lineage>
        <taxon>Bacteria</taxon>
        <taxon>Pseudomonadati</taxon>
        <taxon>Bdellovibrionota</taxon>
        <taxon>Bdellovibrionia</taxon>
        <taxon>Bdellovibrionales</taxon>
        <taxon>Pseudobdellovibrionaceae</taxon>
        <taxon>Bdellovibrio</taxon>
    </lineage>
</organism>